<proteinExistence type="evidence at protein level"/>
<dbReference type="EC" id="6.1.1.12" evidence="1"/>
<dbReference type="EMBL" id="D45167">
    <property type="protein sequence ID" value="BAA08115.1"/>
    <property type="molecule type" value="Genomic_DNA"/>
</dbReference>
<dbReference type="EMBL" id="AP006878">
    <property type="protein sequence ID" value="BAD84681.1"/>
    <property type="molecule type" value="Genomic_DNA"/>
</dbReference>
<dbReference type="RefSeq" id="WP_011249447.1">
    <property type="nucleotide sequence ID" value="NC_006624.1"/>
</dbReference>
<dbReference type="PDB" id="1B8A">
    <property type="method" value="X-ray"/>
    <property type="resolution" value="1.90 A"/>
    <property type="chains" value="A/B=1-438"/>
</dbReference>
<dbReference type="PDB" id="3NEL">
    <property type="method" value="X-ray"/>
    <property type="resolution" value="1.95 A"/>
    <property type="chains" value="A/B=1-438"/>
</dbReference>
<dbReference type="PDB" id="3NEM">
    <property type="method" value="X-ray"/>
    <property type="resolution" value="1.89 A"/>
    <property type="chains" value="A/B=1-438"/>
</dbReference>
<dbReference type="PDB" id="3NEN">
    <property type="method" value="X-ray"/>
    <property type="resolution" value="2.40 A"/>
    <property type="chains" value="A/B=1-438"/>
</dbReference>
<dbReference type="PDBsum" id="1B8A"/>
<dbReference type="PDBsum" id="3NEL"/>
<dbReference type="PDBsum" id="3NEM"/>
<dbReference type="PDBsum" id="3NEN"/>
<dbReference type="SMR" id="Q52428"/>
<dbReference type="FunCoup" id="Q52428">
    <property type="interactions" value="225"/>
</dbReference>
<dbReference type="STRING" id="69014.TK0492"/>
<dbReference type="EnsemblBacteria" id="BAD84681">
    <property type="protein sequence ID" value="BAD84681"/>
    <property type="gene ID" value="TK0492"/>
</dbReference>
<dbReference type="GeneID" id="78447003"/>
<dbReference type="KEGG" id="tko:TK0492"/>
<dbReference type="PATRIC" id="fig|69014.16.peg.483"/>
<dbReference type="eggNOG" id="arCOG00406">
    <property type="taxonomic scope" value="Archaea"/>
</dbReference>
<dbReference type="HOGENOM" id="CLU_004553_2_1_2"/>
<dbReference type="InParanoid" id="Q52428"/>
<dbReference type="OrthoDB" id="5908at2157"/>
<dbReference type="PhylomeDB" id="Q52428"/>
<dbReference type="BRENDA" id="6.1.1.12">
    <property type="organism ID" value="5246"/>
</dbReference>
<dbReference type="SABIO-RK" id="Q52428"/>
<dbReference type="EvolutionaryTrace" id="Q52428"/>
<dbReference type="Proteomes" id="UP000000536">
    <property type="component" value="Chromosome"/>
</dbReference>
<dbReference type="GO" id="GO:0017101">
    <property type="term" value="C:aminoacyl-tRNA synthetase multienzyme complex"/>
    <property type="evidence" value="ECO:0000318"/>
    <property type="project" value="GO_Central"/>
</dbReference>
<dbReference type="GO" id="GO:0005829">
    <property type="term" value="C:cytosol"/>
    <property type="evidence" value="ECO:0000318"/>
    <property type="project" value="GO_Central"/>
</dbReference>
<dbReference type="GO" id="GO:0004815">
    <property type="term" value="F:aspartate-tRNA ligase activity"/>
    <property type="evidence" value="ECO:0000318"/>
    <property type="project" value="GO_Central"/>
</dbReference>
<dbReference type="GO" id="GO:0005524">
    <property type="term" value="F:ATP binding"/>
    <property type="evidence" value="ECO:0007669"/>
    <property type="project" value="UniProtKB-UniRule"/>
</dbReference>
<dbReference type="GO" id="GO:0000287">
    <property type="term" value="F:magnesium ion binding"/>
    <property type="evidence" value="ECO:0007669"/>
    <property type="project" value="UniProtKB-UniRule"/>
</dbReference>
<dbReference type="GO" id="GO:0003723">
    <property type="term" value="F:RNA binding"/>
    <property type="evidence" value="ECO:0000318"/>
    <property type="project" value="GO_Central"/>
</dbReference>
<dbReference type="GO" id="GO:0006422">
    <property type="term" value="P:aspartyl-tRNA aminoacylation"/>
    <property type="evidence" value="ECO:0000318"/>
    <property type="project" value="GO_Central"/>
</dbReference>
<dbReference type="CDD" id="cd00776">
    <property type="entry name" value="AsxRS_core"/>
    <property type="match status" value="1"/>
</dbReference>
<dbReference type="CDD" id="cd04316">
    <property type="entry name" value="ND_PkAspRS_like_N"/>
    <property type="match status" value="1"/>
</dbReference>
<dbReference type="FunFam" id="3.30.930.10:FF:000038">
    <property type="entry name" value="Aspartate--tRNA ligase"/>
    <property type="match status" value="1"/>
</dbReference>
<dbReference type="FunFam" id="2.40.50.140:FF:000324">
    <property type="entry name" value="Aspartate--tRNA(Asp/Asn) ligase"/>
    <property type="match status" value="1"/>
</dbReference>
<dbReference type="Gene3D" id="3.30.930.10">
    <property type="entry name" value="Bira Bifunctional Protein, Domain 2"/>
    <property type="match status" value="1"/>
</dbReference>
<dbReference type="Gene3D" id="2.40.50.140">
    <property type="entry name" value="Nucleic acid-binding proteins"/>
    <property type="match status" value="1"/>
</dbReference>
<dbReference type="HAMAP" id="MF_02075">
    <property type="entry name" value="Asp_tRNA_synth_type2"/>
    <property type="match status" value="1"/>
</dbReference>
<dbReference type="InterPro" id="IPR004364">
    <property type="entry name" value="Aa-tRNA-synt_II"/>
</dbReference>
<dbReference type="InterPro" id="IPR006195">
    <property type="entry name" value="aa-tRNA-synth_II"/>
</dbReference>
<dbReference type="InterPro" id="IPR045864">
    <property type="entry name" value="aa-tRNA-synth_II/BPL/LPL"/>
</dbReference>
<dbReference type="InterPro" id="IPR004523">
    <property type="entry name" value="Asp-tRNA_synthase_2"/>
</dbReference>
<dbReference type="InterPro" id="IPR002312">
    <property type="entry name" value="Asp/Asn-tRNA-synth_IIb"/>
</dbReference>
<dbReference type="InterPro" id="IPR012340">
    <property type="entry name" value="NA-bd_OB-fold"/>
</dbReference>
<dbReference type="InterPro" id="IPR004365">
    <property type="entry name" value="NA-bd_OB_tRNA"/>
</dbReference>
<dbReference type="NCBIfam" id="TIGR00458">
    <property type="entry name" value="aspS_nondisc"/>
    <property type="match status" value="1"/>
</dbReference>
<dbReference type="NCBIfam" id="NF003483">
    <property type="entry name" value="PRK05159.1"/>
    <property type="match status" value="1"/>
</dbReference>
<dbReference type="PANTHER" id="PTHR43450:SF1">
    <property type="entry name" value="ASPARTATE--TRNA LIGASE, CYTOPLASMIC"/>
    <property type="match status" value="1"/>
</dbReference>
<dbReference type="PANTHER" id="PTHR43450">
    <property type="entry name" value="ASPARTYL-TRNA SYNTHETASE"/>
    <property type="match status" value="1"/>
</dbReference>
<dbReference type="Pfam" id="PF00152">
    <property type="entry name" value="tRNA-synt_2"/>
    <property type="match status" value="1"/>
</dbReference>
<dbReference type="Pfam" id="PF01336">
    <property type="entry name" value="tRNA_anti-codon"/>
    <property type="match status" value="1"/>
</dbReference>
<dbReference type="PRINTS" id="PR01042">
    <property type="entry name" value="TRNASYNTHASP"/>
</dbReference>
<dbReference type="SUPFAM" id="SSF55681">
    <property type="entry name" value="Class II aaRS and biotin synthetases"/>
    <property type="match status" value="1"/>
</dbReference>
<dbReference type="SUPFAM" id="SSF50249">
    <property type="entry name" value="Nucleic acid-binding proteins"/>
    <property type="match status" value="1"/>
</dbReference>
<dbReference type="PROSITE" id="PS50862">
    <property type="entry name" value="AA_TRNA_LIGASE_II"/>
    <property type="match status" value="1"/>
</dbReference>
<feature type="chain" id="PRO_0000111005" description="Aspartate--tRNA(Asp) ligase">
    <location>
        <begin position="1"/>
        <end position="438"/>
    </location>
</feature>
<feature type="region of interest" description="Aspartate">
    <location>
        <begin position="192"/>
        <end position="195"/>
    </location>
</feature>
<feature type="binding site">
    <location>
        <position position="170"/>
    </location>
    <ligand>
        <name>L-aspartate</name>
        <dbReference type="ChEBI" id="CHEBI:29991"/>
    </ligand>
</feature>
<feature type="binding site">
    <location>
        <begin position="214"/>
        <end position="216"/>
    </location>
    <ligand>
        <name>ATP</name>
        <dbReference type="ChEBI" id="CHEBI:30616"/>
    </ligand>
</feature>
<feature type="binding site">
    <location>
        <position position="214"/>
    </location>
    <ligand>
        <name>L-aspartate</name>
        <dbReference type="ChEBI" id="CHEBI:29991"/>
    </ligand>
</feature>
<feature type="binding site">
    <location>
        <begin position="222"/>
        <end position="224"/>
    </location>
    <ligand>
        <name>ATP</name>
        <dbReference type="ChEBI" id="CHEBI:30616"/>
    </ligand>
</feature>
<feature type="binding site">
    <location>
        <position position="361"/>
    </location>
    <ligand>
        <name>ATP</name>
        <dbReference type="ChEBI" id="CHEBI:30616"/>
    </ligand>
</feature>
<feature type="binding site">
    <location>
        <position position="361"/>
    </location>
    <ligand>
        <name>Mg(2+)</name>
        <dbReference type="ChEBI" id="CHEBI:18420"/>
        <label>2</label>
    </ligand>
</feature>
<feature type="binding site">
    <location>
        <position position="361"/>
    </location>
    <ligand>
        <name>Mg(2+)</name>
        <dbReference type="ChEBI" id="CHEBI:18420"/>
        <label>3</label>
    </ligand>
</feature>
<feature type="binding site">
    <location>
        <position position="364"/>
    </location>
    <ligand>
        <name>L-aspartate</name>
        <dbReference type="ChEBI" id="CHEBI:29991"/>
    </ligand>
</feature>
<feature type="binding site">
    <location>
        <position position="364"/>
    </location>
    <ligand>
        <name>Mg(2+)</name>
        <dbReference type="ChEBI" id="CHEBI:18420"/>
        <label>2</label>
    </ligand>
</feature>
<feature type="binding site">
    <location>
        <position position="368"/>
    </location>
    <ligand>
        <name>L-aspartate</name>
        <dbReference type="ChEBI" id="CHEBI:29991"/>
    </ligand>
</feature>
<feature type="binding site">
    <location>
        <begin position="409"/>
        <end position="412"/>
    </location>
    <ligand>
        <name>ATP</name>
        <dbReference type="ChEBI" id="CHEBI:30616"/>
    </ligand>
</feature>
<feature type="site" description="Important for tRNA discrimination">
    <location>
        <position position="26"/>
    </location>
</feature>
<feature type="site" description="Important for tRNA discrimination">
    <location>
        <position position="85"/>
    </location>
</feature>
<feature type="mutagenesis site" description="Gains the ability to form Asp-tRNA(Asn) in vitro. Only 2-fold decrease in catalytic efficiency for Asp-tRNA(Asp) synthesis." evidence="4">
    <original>W</original>
    <variation>H</variation>
    <location>
        <position position="26"/>
    </location>
</feature>
<feature type="mutagenesis site" description="Gains the ability to form Asp-tRNA(Asn) in vitro, and is impaired in its ability to synthesize Asp-tRNA(Asp) due to a 8-fold decrease in affinity for tRNA(Asp)." evidence="4">
    <original>K</original>
    <variation>P</variation>
    <location>
        <position position="85"/>
    </location>
</feature>
<feature type="sequence conflict" description="In Ref. 1; BAA08115." evidence="6" ref="1">
    <original>L</original>
    <variation>V</variation>
    <location>
        <position position="413"/>
    </location>
</feature>
<feature type="helix" evidence="7">
    <location>
        <begin position="7"/>
        <end position="9"/>
    </location>
</feature>
<feature type="helix" evidence="7">
    <location>
        <begin position="12"/>
        <end position="14"/>
    </location>
</feature>
<feature type="strand" evidence="7">
    <location>
        <begin position="18"/>
        <end position="31"/>
    </location>
</feature>
<feature type="strand" evidence="7">
    <location>
        <begin position="34"/>
        <end position="41"/>
    </location>
</feature>
<feature type="strand" evidence="7">
    <location>
        <begin position="44"/>
        <end position="51"/>
    </location>
</feature>
<feature type="turn" evidence="7">
    <location>
        <begin position="52"/>
        <end position="54"/>
    </location>
</feature>
<feature type="helix" evidence="7">
    <location>
        <begin position="57"/>
        <end position="62"/>
    </location>
</feature>
<feature type="helix" evidence="7">
    <location>
        <begin position="63"/>
        <end position="65"/>
    </location>
</feature>
<feature type="strand" evidence="7">
    <location>
        <begin position="71"/>
        <end position="80"/>
    </location>
</feature>
<feature type="strand" evidence="7">
    <location>
        <begin position="87"/>
        <end position="99"/>
    </location>
</feature>
<feature type="strand" evidence="7">
    <location>
        <begin position="111"/>
        <end position="113"/>
    </location>
</feature>
<feature type="helix" evidence="7">
    <location>
        <begin position="117"/>
        <end position="122"/>
    </location>
</feature>
<feature type="helix" evidence="7">
    <location>
        <begin position="124"/>
        <end position="127"/>
    </location>
</feature>
<feature type="helix" evidence="7">
    <location>
        <begin position="131"/>
        <end position="153"/>
    </location>
</feature>
<feature type="strand" evidence="7">
    <location>
        <begin position="163"/>
        <end position="167"/>
    </location>
</feature>
<feature type="strand" evidence="7">
    <location>
        <begin position="172"/>
        <end position="174"/>
    </location>
</feature>
<feature type="strand" evidence="7">
    <location>
        <begin position="177"/>
        <end position="180"/>
    </location>
</feature>
<feature type="strand" evidence="7">
    <location>
        <begin position="183"/>
        <end position="187"/>
    </location>
</feature>
<feature type="helix" evidence="7">
    <location>
        <begin position="192"/>
        <end position="197"/>
    </location>
</feature>
<feature type="helix" evidence="7">
    <location>
        <begin position="198"/>
        <end position="200"/>
    </location>
</feature>
<feature type="strand" evidence="7">
    <location>
        <begin position="205"/>
        <end position="213"/>
    </location>
</feature>
<feature type="strand" evidence="7">
    <location>
        <begin position="225"/>
        <end position="236"/>
    </location>
</feature>
<feature type="helix" evidence="7">
    <location>
        <begin position="240"/>
        <end position="261"/>
    </location>
</feature>
<feature type="helix" evidence="7">
    <location>
        <begin position="263"/>
        <end position="268"/>
    </location>
</feature>
<feature type="strand" evidence="7">
    <location>
        <begin position="282"/>
        <end position="284"/>
    </location>
</feature>
<feature type="helix" evidence="7">
    <location>
        <begin position="285"/>
        <end position="294"/>
    </location>
</feature>
<feature type="helix" evidence="7">
    <location>
        <begin position="307"/>
        <end position="321"/>
    </location>
</feature>
<feature type="strand" evidence="7">
    <location>
        <begin position="324"/>
        <end position="330"/>
    </location>
</feature>
<feature type="helix" evidence="7">
    <location>
        <begin position="333"/>
        <end position="335"/>
    </location>
</feature>
<feature type="strand" evidence="8">
    <location>
        <begin position="344"/>
        <end position="346"/>
    </location>
</feature>
<feature type="strand" evidence="7">
    <location>
        <begin position="349"/>
        <end position="357"/>
    </location>
</feature>
<feature type="strand" evidence="7">
    <location>
        <begin position="360"/>
        <end position="368"/>
    </location>
</feature>
<feature type="helix" evidence="7">
    <location>
        <begin position="372"/>
        <end position="381"/>
    </location>
</feature>
<feature type="helix" evidence="7">
    <location>
        <begin position="386"/>
        <end position="389"/>
    </location>
</feature>
<feature type="helix" evidence="7">
    <location>
        <begin position="390"/>
        <end position="394"/>
    </location>
</feature>
<feature type="strand" evidence="7">
    <location>
        <begin position="403"/>
        <end position="409"/>
    </location>
</feature>
<feature type="helix" evidence="7">
    <location>
        <begin position="410"/>
        <end position="417"/>
    </location>
</feature>
<feature type="helix" evidence="7">
    <location>
        <begin position="423"/>
        <end position="426"/>
    </location>
</feature>
<feature type="strand" evidence="7">
    <location>
        <begin position="427"/>
        <end position="429"/>
    </location>
</feature>
<organism>
    <name type="scientific">Thermococcus kodakarensis (strain ATCC BAA-918 / JCM 12380 / KOD1)</name>
    <name type="common">Pyrococcus kodakaraensis (strain KOD1)</name>
    <dbReference type="NCBI Taxonomy" id="69014"/>
    <lineage>
        <taxon>Archaea</taxon>
        <taxon>Methanobacteriati</taxon>
        <taxon>Methanobacteriota</taxon>
        <taxon>Thermococci</taxon>
        <taxon>Thermococcales</taxon>
        <taxon>Thermococcaceae</taxon>
        <taxon>Thermococcus</taxon>
    </lineage>
</organism>
<protein>
    <recommendedName>
        <fullName evidence="1">Aspartate--tRNA(Asp) ligase</fullName>
        <ecNumber evidence="1">6.1.1.12</ecNumber>
    </recommendedName>
    <alternativeName>
        <fullName evidence="1">Aspartyl-tRNA synthetase</fullName>
        <shortName evidence="1">AspRS</shortName>
    </alternativeName>
    <alternativeName>
        <fullName evidence="1">Discriminating aspartyl-tRNA synthetase</fullName>
        <shortName evidence="1">D-AspRS</shortName>
    </alternativeName>
</protein>
<evidence type="ECO:0000255" key="1">
    <source>
        <dbReference type="HAMAP-Rule" id="MF_02075"/>
    </source>
</evidence>
<evidence type="ECO:0000269" key="2">
    <source>
    </source>
</evidence>
<evidence type="ECO:0000269" key="3">
    <source>
    </source>
</evidence>
<evidence type="ECO:0000269" key="4">
    <source>
    </source>
</evidence>
<evidence type="ECO:0000269" key="5">
    <source>
    </source>
</evidence>
<evidence type="ECO:0000305" key="6"/>
<evidence type="ECO:0007829" key="7">
    <source>
        <dbReference type="PDB" id="3NEM"/>
    </source>
</evidence>
<evidence type="ECO:0007829" key="8">
    <source>
        <dbReference type="PDB" id="3NEN"/>
    </source>
</evidence>
<accession>Q52428</accession>
<accession>Q5JD76</accession>
<gene>
    <name evidence="1" type="primary">aspS</name>
    <name type="ordered locus">TK0492</name>
</gene>
<sequence length="438" mass="50910">MYRTHYSSEITEELNGQKVKVAGWVWEVKDLGGIKFLWIRDRDGIVQITAPKKKVDPELFKLIPKLRSEDVVAVEGVVNFTPKAKLGFEILPEKIVVLNRAETPLPLDPTGKVKAELDTRLDNRFMDLRRPEVMAIFKIRSSVFKAVRDFFHENGFIEIHTPKIIATATEGGTELFPMKYFEEDAFLAQSPQLYKQIMMASGLDRVYEIAPIFRAEEHNTTRHLNEAWSIDSEMAFIEDEEEVMSFLERLVAHAINYVREHNAKELDILNFELEEPKLPFPRVSYDKALEILGDLGKEIPWGEDIDTEGERLLGKYMMENENAPLYFLYQYPSEAKPFYIMKYDNKPEICRAFDLEYRGVEISSGGQREHRHDILVEQIKEKGLNPESFEFYLKAFRYGMPPHGGFGLGAERLIKQMLDLPNIREVILFPRDRRRLTP</sequence>
<comment type="function">
    <text evidence="2 3 4">Catalyzes the attachment of L-aspartate to tRNA(Asp) in a two-step reaction: L-aspartate is first activated by ATP to form Asp-AMP and then transferred to the acceptor end of tRNA(Asp). Is specific for tRNA(Asp) since it aspartylates tRNA(Asn) 3 orders of magnitude less efficiently than tRNA(Asp).</text>
</comment>
<comment type="catalytic activity">
    <reaction evidence="1 3 4">
        <text>tRNA(Asp) + L-aspartate + ATP = L-aspartyl-tRNA(Asp) + AMP + diphosphate</text>
        <dbReference type="Rhea" id="RHEA:19649"/>
        <dbReference type="Rhea" id="RHEA-COMP:9660"/>
        <dbReference type="Rhea" id="RHEA-COMP:9678"/>
        <dbReference type="ChEBI" id="CHEBI:29991"/>
        <dbReference type="ChEBI" id="CHEBI:30616"/>
        <dbReference type="ChEBI" id="CHEBI:33019"/>
        <dbReference type="ChEBI" id="CHEBI:78442"/>
        <dbReference type="ChEBI" id="CHEBI:78516"/>
        <dbReference type="ChEBI" id="CHEBI:456215"/>
        <dbReference type="EC" id="6.1.1.12"/>
    </reaction>
</comment>
<comment type="cofactor">
    <cofactor evidence="1 5">
        <name>Mg(2+)</name>
        <dbReference type="ChEBI" id="CHEBI:18420"/>
    </cofactor>
    <text evidence="1 5">Binds 3 Mg(2+) cations per subunit. The strongest magnesium site (Mg1) is bound to the beta- and gamma-phosphates of ATP and four water molecules complete its coordination sphere.</text>
</comment>
<comment type="biophysicochemical properties">
    <kinetics>
        <KM evidence="4">1.4 uM for tRNA(Asp) (at 60 degrees Celsius)</KM>
        <text>kcat is 0.061 sec(-1) for tRNA(Asp) aspartylation (at 60 degrees Celsius).</text>
    </kinetics>
    <temperatureDependence>
        <text evidence="4">Optimum temperature is 60 degrees Celsius.</text>
    </temperatureDependence>
</comment>
<comment type="subunit">
    <text evidence="1 5">Homodimer.</text>
</comment>
<comment type="subcellular location">
    <subcellularLocation>
        <location evidence="1">Cytoplasm</location>
    </subcellularLocation>
</comment>
<comment type="similarity">
    <text evidence="1">Belongs to the class-II aminoacyl-tRNA synthetase family. Type 2 subfamily.</text>
</comment>
<name>SYD_THEKO</name>
<reference key="1">
    <citation type="journal article" date="1995" name="Gene">
        <title>Aspartyl-tRNA synthetase of the hyperthermophilic archaeon Pyrococcus sp. KOD1 has a chimerical structure of eukaryotic and bacterial enzymes.</title>
        <authorList>
            <person name="Imanaka T."/>
            <person name="Lee S."/>
            <person name="Takagi M."/>
            <person name="Fujiwara S."/>
        </authorList>
    </citation>
    <scope>NUCLEOTIDE SEQUENCE [GENOMIC DNA]</scope>
    <source>
        <strain>ATCC BAA-918 / JCM 12380 / KOD1</strain>
    </source>
</reference>
<reference key="2">
    <citation type="journal article" date="2005" name="Genome Res.">
        <title>Complete genome sequence of the hyperthermophilic archaeon Thermococcus kodakaraensis KOD1 and comparison with Pyrococcus genomes.</title>
        <authorList>
            <person name="Fukui T."/>
            <person name="Atomi H."/>
            <person name="Kanai T."/>
            <person name="Matsumi R."/>
            <person name="Fujiwara S."/>
            <person name="Imanaka T."/>
        </authorList>
    </citation>
    <scope>NUCLEOTIDE SEQUENCE [LARGE SCALE GENOMIC DNA]</scope>
    <source>
        <strain>ATCC BAA-918 / JCM 12380 / KOD1</strain>
    </source>
</reference>
<reference key="3">
    <citation type="journal article" date="2002" name="J. Biol. Chem.">
        <title>Evolutionary divergence of the archaeal aspartyl-tRNA synthetases into discriminating and nondiscriminating forms.</title>
        <authorList>
            <person name="Tumbula-Hansen D."/>
            <person name="Feng L."/>
            <person name="Toogood H."/>
            <person name="Stetter K.O."/>
            <person name="Soll D."/>
        </authorList>
    </citation>
    <scope>FUNCTION AS A DISCRIMINATING ASPRS</scope>
</reference>
<reference key="4">
    <citation type="journal article" date="2003" name="EMBO J.">
        <title>Non-discriminating and discriminating aspartyl-tRNA synthetases differ in the anticodon-binding domain.</title>
        <authorList>
            <person name="Charron C."/>
            <person name="Roy H."/>
            <person name="Blaise M."/>
            <person name="Giege R."/>
            <person name="Kern D."/>
        </authorList>
    </citation>
    <scope>FUNCTION AS A DISCRIMINATING ASPRS</scope>
    <scope>CATALYTIC ACTIVITY</scope>
    <scope>SUBSTRATE SPECIFICITY</scope>
    <source>
        <strain>ATCC BAA-918 / JCM 12380 / KOD1</strain>
    </source>
</reference>
<reference key="5">
    <citation type="journal article" date="2003" name="Proc. Natl. Acad. Sci. U.S.A.">
        <title>Expanding tRNA recognition of a tRNA synthetase by a single amino acid change.</title>
        <authorList>
            <person name="Feng L."/>
            <person name="Tumbula-Hansen D."/>
            <person name="Toogood H."/>
            <person name="Soll D."/>
        </authorList>
    </citation>
    <scope>FUNCTION AS A DISCRIMINATING ASPRS</scope>
    <scope>CATALYTIC ACTIVITY</scope>
    <scope>SUBSTRATE SPECIFICITY</scope>
    <scope>BIOPHYSICOCHEMICAL PROPERTIES</scope>
    <scope>MUTAGENESIS OF TRP-26 AND LYS-85</scope>
    <scope>DISCRIMINATION SITES</scope>
</reference>
<reference key="6">
    <citation type="journal article" date="1998" name="EMBO J.">
        <title>Crystal structure of aspartyl-tRNA synthetase from Pyrococcus kodakaraensis KOD: archaeon specificity and catalytic mechanism of adenylate formation.</title>
        <authorList>
            <person name="Schmitt E."/>
            <person name="Moulinier L."/>
            <person name="Fujiwara S."/>
            <person name="Imanaka T."/>
            <person name="Thierry J.-C."/>
            <person name="Moras D."/>
        </authorList>
    </citation>
    <scope>X-RAY CRYSTALLOGRAPHY (1.9 ANGSTROMS) OF APOENZYME AND IN COMPLEXES WITH ATP-MG; ASPARTATE AND ASPARTYL-AMP</scope>
    <scope>COFACTOR</scope>
    <scope>SUBUNIT</scope>
    <source>
        <strain>ATCC BAA-918 / JCM 12380 / KOD1</strain>
    </source>
</reference>
<keyword id="KW-0002">3D-structure</keyword>
<keyword id="KW-0030">Aminoacyl-tRNA synthetase</keyword>
<keyword id="KW-0067">ATP-binding</keyword>
<keyword id="KW-0963">Cytoplasm</keyword>
<keyword id="KW-0436">Ligase</keyword>
<keyword id="KW-0460">Magnesium</keyword>
<keyword id="KW-0479">Metal-binding</keyword>
<keyword id="KW-0547">Nucleotide-binding</keyword>
<keyword id="KW-0648">Protein biosynthesis</keyword>
<keyword id="KW-1185">Reference proteome</keyword>